<dbReference type="EC" id="2.4.2.8" evidence="2"/>
<dbReference type="EMBL" id="J00423">
    <property type="protein sequence ID" value="AAA96232.1"/>
    <property type="molecule type" value="mRNA"/>
</dbReference>
<dbReference type="EMBL" id="K01515">
    <property type="protein sequence ID" value="AAA96271.1"/>
    <property type="molecule type" value="Genomic_DNA"/>
</dbReference>
<dbReference type="EMBL" id="K01507">
    <property type="protein sequence ID" value="AAA96271.1"/>
    <property type="status" value="JOINED"/>
    <property type="molecule type" value="Genomic_DNA"/>
</dbReference>
<dbReference type="EMBL" id="K01508">
    <property type="protein sequence ID" value="AAA96271.1"/>
    <property type="status" value="JOINED"/>
    <property type="molecule type" value="Genomic_DNA"/>
</dbReference>
<dbReference type="EMBL" id="K01509">
    <property type="protein sequence ID" value="AAA96271.1"/>
    <property type="status" value="JOINED"/>
    <property type="molecule type" value="Genomic_DNA"/>
</dbReference>
<dbReference type="EMBL" id="K01510">
    <property type="protein sequence ID" value="AAA96271.1"/>
    <property type="status" value="JOINED"/>
    <property type="molecule type" value="Genomic_DNA"/>
</dbReference>
<dbReference type="EMBL" id="K01511">
    <property type="protein sequence ID" value="AAA96271.1"/>
    <property type="status" value="JOINED"/>
    <property type="molecule type" value="Genomic_DNA"/>
</dbReference>
<dbReference type="EMBL" id="K01512">
    <property type="protein sequence ID" value="AAA96271.1"/>
    <property type="status" value="JOINED"/>
    <property type="molecule type" value="Genomic_DNA"/>
</dbReference>
<dbReference type="EMBL" id="K01513">
    <property type="protein sequence ID" value="AAA96271.1"/>
    <property type="status" value="JOINED"/>
    <property type="molecule type" value="Genomic_DNA"/>
</dbReference>
<dbReference type="EMBL" id="K01514">
    <property type="protein sequence ID" value="AAA96271.1"/>
    <property type="status" value="JOINED"/>
    <property type="molecule type" value="Genomic_DNA"/>
</dbReference>
<dbReference type="EMBL" id="AK002286">
    <property type="protein sequence ID" value="BAB21989.1"/>
    <property type="molecule type" value="mRNA"/>
</dbReference>
<dbReference type="EMBL" id="AK088114">
    <property type="protein sequence ID" value="BAC40153.1"/>
    <property type="molecule type" value="mRNA"/>
</dbReference>
<dbReference type="EMBL" id="AK146626">
    <property type="protein sequence ID" value="BAE27315.1"/>
    <property type="molecule type" value="mRNA"/>
</dbReference>
<dbReference type="EMBL" id="BC083145">
    <property type="protein sequence ID" value="AAH83145.1"/>
    <property type="molecule type" value="mRNA"/>
</dbReference>
<dbReference type="CCDS" id="CCDS40972.1"/>
<dbReference type="PIR" id="I49756">
    <property type="entry name" value="RTMSG"/>
</dbReference>
<dbReference type="RefSeq" id="NP_038584.2">
    <property type="nucleotide sequence ID" value="NM_013556.2"/>
</dbReference>
<dbReference type="SMR" id="P00493"/>
<dbReference type="BioGRID" id="200411">
    <property type="interactions" value="17"/>
</dbReference>
<dbReference type="DIP" id="DIP-6034N"/>
<dbReference type="FunCoup" id="P00493">
    <property type="interactions" value="1309"/>
</dbReference>
<dbReference type="MINT" id="P00493"/>
<dbReference type="STRING" id="10090.ENSMUSP00000026723"/>
<dbReference type="ChEMBL" id="CHEMBL3243916"/>
<dbReference type="GlyGen" id="P00493">
    <property type="glycosylation" value="1 site, 1 O-linked glycan (1 site)"/>
</dbReference>
<dbReference type="iPTMnet" id="P00493"/>
<dbReference type="MetOSite" id="P00493"/>
<dbReference type="PhosphoSitePlus" id="P00493"/>
<dbReference type="SwissPalm" id="P00493"/>
<dbReference type="jPOST" id="P00493"/>
<dbReference type="PaxDb" id="10090-ENSMUSP00000026723"/>
<dbReference type="PeptideAtlas" id="P00493"/>
<dbReference type="ProteomicsDB" id="267060"/>
<dbReference type="Pumba" id="P00493"/>
<dbReference type="Antibodypedia" id="1912">
    <property type="antibodies" value="621 antibodies from 37 providers"/>
</dbReference>
<dbReference type="DNASU" id="15452"/>
<dbReference type="Ensembl" id="ENSMUST00000026723.9">
    <property type="protein sequence ID" value="ENSMUSP00000026723.9"/>
    <property type="gene ID" value="ENSMUSG00000025630.9"/>
</dbReference>
<dbReference type="GeneID" id="15452"/>
<dbReference type="KEGG" id="mmu:15452"/>
<dbReference type="UCSC" id="uc009ter.1">
    <property type="organism name" value="mouse"/>
</dbReference>
<dbReference type="AGR" id="MGI:96217"/>
<dbReference type="CTD" id="3251"/>
<dbReference type="MGI" id="MGI:96217">
    <property type="gene designation" value="Hprt1"/>
</dbReference>
<dbReference type="VEuPathDB" id="HostDB:ENSMUSG00000025630"/>
<dbReference type="eggNOG" id="KOG3367">
    <property type="taxonomic scope" value="Eukaryota"/>
</dbReference>
<dbReference type="GeneTree" id="ENSGT00940000155028"/>
<dbReference type="HOGENOM" id="CLU_073615_3_0_1"/>
<dbReference type="InParanoid" id="P00493"/>
<dbReference type="OMA" id="MQWRVAP"/>
<dbReference type="OrthoDB" id="9449045at2759"/>
<dbReference type="PhylomeDB" id="P00493"/>
<dbReference type="TreeFam" id="TF313367"/>
<dbReference type="Reactome" id="R-MMU-74217">
    <property type="pathway name" value="Purine salvage"/>
</dbReference>
<dbReference type="Reactome" id="R-MMU-9748787">
    <property type="pathway name" value="Azathioprine ADME"/>
</dbReference>
<dbReference type="UniPathway" id="UPA00591">
    <property type="reaction ID" value="UER00648"/>
</dbReference>
<dbReference type="BioGRID-ORCS" id="15452">
    <property type="hits" value="1 hit in 79 CRISPR screens"/>
</dbReference>
<dbReference type="ChiTaRS" id="Hprt">
    <property type="organism name" value="mouse"/>
</dbReference>
<dbReference type="PRO" id="PR:P00493"/>
<dbReference type="Proteomes" id="UP000000589">
    <property type="component" value="Chromosome X"/>
</dbReference>
<dbReference type="RNAct" id="P00493">
    <property type="molecule type" value="protein"/>
</dbReference>
<dbReference type="Bgee" id="ENSMUSG00000025630">
    <property type="expression patterns" value="Expressed in cleaving embryo and 289 other cell types or tissues"/>
</dbReference>
<dbReference type="GO" id="GO:0005737">
    <property type="term" value="C:cytoplasm"/>
    <property type="evidence" value="ECO:0000314"/>
    <property type="project" value="MGI"/>
</dbReference>
<dbReference type="GO" id="GO:0005829">
    <property type="term" value="C:cytosol"/>
    <property type="evidence" value="ECO:0000314"/>
    <property type="project" value="MGI"/>
</dbReference>
<dbReference type="GO" id="GO:0052657">
    <property type="term" value="F:guanine phosphoribosyltransferase activity"/>
    <property type="evidence" value="ECO:0000315"/>
    <property type="project" value="MGI"/>
</dbReference>
<dbReference type="GO" id="GO:0004422">
    <property type="term" value="F:hypoxanthine phosphoribosyltransferase activity"/>
    <property type="evidence" value="ECO:0000314"/>
    <property type="project" value="MGI"/>
</dbReference>
<dbReference type="GO" id="GO:0042802">
    <property type="term" value="F:identical protein binding"/>
    <property type="evidence" value="ECO:0000353"/>
    <property type="project" value="MGI"/>
</dbReference>
<dbReference type="GO" id="GO:0000287">
    <property type="term" value="F:magnesium ion binding"/>
    <property type="evidence" value="ECO:0007669"/>
    <property type="project" value="Ensembl"/>
</dbReference>
<dbReference type="GO" id="GO:0000166">
    <property type="term" value="F:nucleotide binding"/>
    <property type="evidence" value="ECO:0007669"/>
    <property type="project" value="UniProtKB-KW"/>
</dbReference>
<dbReference type="GO" id="GO:0046083">
    <property type="term" value="P:adenine metabolic process"/>
    <property type="evidence" value="ECO:0000316"/>
    <property type="project" value="MGI"/>
</dbReference>
<dbReference type="GO" id="GO:0044209">
    <property type="term" value="P:AMP salvage"/>
    <property type="evidence" value="ECO:0000314"/>
    <property type="project" value="MGI"/>
</dbReference>
<dbReference type="GO" id="GO:0021954">
    <property type="term" value="P:central nervous system neuron development"/>
    <property type="evidence" value="ECO:0000315"/>
    <property type="project" value="MGI"/>
</dbReference>
<dbReference type="GO" id="GO:0021895">
    <property type="term" value="P:cerebral cortex neuron differentiation"/>
    <property type="evidence" value="ECO:0000315"/>
    <property type="project" value="MGI"/>
</dbReference>
<dbReference type="GO" id="GO:0048813">
    <property type="term" value="P:dendrite morphogenesis"/>
    <property type="evidence" value="ECO:0000315"/>
    <property type="project" value="MGI"/>
</dbReference>
<dbReference type="GO" id="GO:0042417">
    <property type="term" value="P:dopamine metabolic process"/>
    <property type="evidence" value="ECO:0000315"/>
    <property type="project" value="MGI"/>
</dbReference>
<dbReference type="GO" id="GO:0071542">
    <property type="term" value="P:dopaminergic neuron differentiation"/>
    <property type="evidence" value="ECO:0000315"/>
    <property type="project" value="MGI"/>
</dbReference>
<dbReference type="GO" id="GO:0046038">
    <property type="term" value="P:GMP catabolic process"/>
    <property type="evidence" value="ECO:0000250"/>
    <property type="project" value="UniProtKB"/>
</dbReference>
<dbReference type="GO" id="GO:0032263">
    <property type="term" value="P:GMP salvage"/>
    <property type="evidence" value="ECO:0000315"/>
    <property type="project" value="MGI"/>
</dbReference>
<dbReference type="GO" id="GO:0007625">
    <property type="term" value="P:grooming behavior"/>
    <property type="evidence" value="ECO:0000316"/>
    <property type="project" value="MGI"/>
</dbReference>
<dbReference type="GO" id="GO:0006178">
    <property type="term" value="P:guanine salvage"/>
    <property type="evidence" value="ECO:0007669"/>
    <property type="project" value="Ensembl"/>
</dbReference>
<dbReference type="GO" id="GO:0046100">
    <property type="term" value="P:hypoxanthine metabolic process"/>
    <property type="evidence" value="ECO:0000315"/>
    <property type="project" value="MGI"/>
</dbReference>
<dbReference type="GO" id="GO:0043103">
    <property type="term" value="P:hypoxanthine salvage"/>
    <property type="evidence" value="ECO:0000250"/>
    <property type="project" value="UniProtKB"/>
</dbReference>
<dbReference type="GO" id="GO:0046040">
    <property type="term" value="P:IMP metabolic process"/>
    <property type="evidence" value="ECO:0000250"/>
    <property type="project" value="UniProtKB"/>
</dbReference>
<dbReference type="GO" id="GO:0032264">
    <property type="term" value="P:IMP salvage"/>
    <property type="evidence" value="ECO:0000315"/>
    <property type="project" value="MGI"/>
</dbReference>
<dbReference type="GO" id="GO:0007626">
    <property type="term" value="P:locomotory behavior"/>
    <property type="evidence" value="ECO:0000315"/>
    <property type="project" value="MGI"/>
</dbReference>
<dbReference type="GO" id="GO:0046651">
    <property type="term" value="P:lymphocyte proliferation"/>
    <property type="evidence" value="ECO:0000315"/>
    <property type="project" value="MGI"/>
</dbReference>
<dbReference type="GO" id="GO:0045964">
    <property type="term" value="P:positive regulation of dopamine metabolic process"/>
    <property type="evidence" value="ECO:0007669"/>
    <property type="project" value="Ensembl"/>
</dbReference>
<dbReference type="GO" id="GO:0051289">
    <property type="term" value="P:protein homotetramerization"/>
    <property type="evidence" value="ECO:0007669"/>
    <property type="project" value="Ensembl"/>
</dbReference>
<dbReference type="GO" id="GO:0006166">
    <property type="term" value="P:purine ribonucleoside salvage"/>
    <property type="evidence" value="ECO:0000315"/>
    <property type="project" value="MGI"/>
</dbReference>
<dbReference type="GO" id="GO:0001975">
    <property type="term" value="P:response to amphetamine"/>
    <property type="evidence" value="ECO:0000315"/>
    <property type="project" value="MGI"/>
</dbReference>
<dbReference type="GO" id="GO:0021756">
    <property type="term" value="P:striatum development"/>
    <property type="evidence" value="ECO:0000315"/>
    <property type="project" value="MGI"/>
</dbReference>
<dbReference type="GO" id="GO:0001913">
    <property type="term" value="P:T cell mediated cytotoxicity"/>
    <property type="evidence" value="ECO:0000315"/>
    <property type="project" value="MGI"/>
</dbReference>
<dbReference type="CDD" id="cd06223">
    <property type="entry name" value="PRTases_typeI"/>
    <property type="match status" value="1"/>
</dbReference>
<dbReference type="FunFam" id="3.40.50.2020:FF:000019">
    <property type="entry name" value="Hypoxanthine phosphoribosyltransferase"/>
    <property type="match status" value="1"/>
</dbReference>
<dbReference type="Gene3D" id="3.40.50.2020">
    <property type="match status" value="1"/>
</dbReference>
<dbReference type="InterPro" id="IPR050408">
    <property type="entry name" value="HGPRT"/>
</dbReference>
<dbReference type="InterPro" id="IPR005904">
    <property type="entry name" value="Hxn_phspho_trans"/>
</dbReference>
<dbReference type="InterPro" id="IPR000836">
    <property type="entry name" value="PRibTrfase_dom"/>
</dbReference>
<dbReference type="InterPro" id="IPR029057">
    <property type="entry name" value="PRTase-like"/>
</dbReference>
<dbReference type="NCBIfam" id="TIGR01203">
    <property type="entry name" value="HGPRTase"/>
    <property type="match status" value="1"/>
</dbReference>
<dbReference type="PANTHER" id="PTHR43340">
    <property type="entry name" value="HYPOXANTHINE-GUANINE PHOSPHORIBOSYLTRANSFERASE"/>
    <property type="match status" value="1"/>
</dbReference>
<dbReference type="PANTHER" id="PTHR43340:SF6">
    <property type="entry name" value="HYPOXANTHINE-GUANINE PHOSPHORIBOSYLTRANSFERASE"/>
    <property type="match status" value="1"/>
</dbReference>
<dbReference type="Pfam" id="PF00156">
    <property type="entry name" value="Pribosyltran"/>
    <property type="match status" value="1"/>
</dbReference>
<dbReference type="SUPFAM" id="SSF53271">
    <property type="entry name" value="PRTase-like"/>
    <property type="match status" value="1"/>
</dbReference>
<dbReference type="PROSITE" id="PS00103">
    <property type="entry name" value="PUR_PYR_PR_TRANSFER"/>
    <property type="match status" value="1"/>
</dbReference>
<sequence length="218" mass="24570">MPTRSPSVVISDDEPGYDLDLFCIPNHYAEDLEKVFIPHGLIMDRTERLARDVMKEMGGHHIVALCVLKGGYKFFADLLDYIKALNRNSDRSIPMTVDFIRLKSYCNDQSTGDIKVIGGDDLSTLTGKNVLIVEDIIDTGKTMQTLLSLVKQYSPKMVKVASLLVKRTSRSVGYRPDFVGFEIPDKFVVGYALDYNEYFRDLNHVCVISETGKAKYKA</sequence>
<evidence type="ECO:0000250" key="1"/>
<evidence type="ECO:0000250" key="2">
    <source>
        <dbReference type="UniProtKB" id="P00492"/>
    </source>
</evidence>
<evidence type="ECO:0000250" key="3">
    <source>
        <dbReference type="UniProtKB" id="P27605"/>
    </source>
</evidence>
<evidence type="ECO:0000305" key="4"/>
<evidence type="ECO:0007744" key="5">
    <source>
    </source>
</evidence>
<comment type="function">
    <text evidence="1">Converts guanine to guanosine monophosphate, and hypoxanthine to inosine monophosphate. Transfers the 5-phosphoribosyl group from 5-phosphoribosylpyrophosphate onto the purine. Plays a central role in the generation of purine nucleotides through the purine salvage pathway (By similarity).</text>
</comment>
<comment type="catalytic activity">
    <reaction evidence="2">
        <text>IMP + diphosphate = hypoxanthine + 5-phospho-alpha-D-ribose 1-diphosphate</text>
        <dbReference type="Rhea" id="RHEA:17973"/>
        <dbReference type="ChEBI" id="CHEBI:17368"/>
        <dbReference type="ChEBI" id="CHEBI:33019"/>
        <dbReference type="ChEBI" id="CHEBI:58017"/>
        <dbReference type="ChEBI" id="CHEBI:58053"/>
        <dbReference type="EC" id="2.4.2.8"/>
    </reaction>
    <physiologicalReaction direction="right-to-left" evidence="2">
        <dbReference type="Rhea" id="RHEA:17975"/>
    </physiologicalReaction>
</comment>
<comment type="catalytic activity">
    <reaction evidence="2">
        <text>GMP + diphosphate = guanine + 5-phospho-alpha-D-ribose 1-diphosphate</text>
        <dbReference type="Rhea" id="RHEA:25424"/>
        <dbReference type="ChEBI" id="CHEBI:16235"/>
        <dbReference type="ChEBI" id="CHEBI:33019"/>
        <dbReference type="ChEBI" id="CHEBI:58017"/>
        <dbReference type="ChEBI" id="CHEBI:58115"/>
        <dbReference type="EC" id="2.4.2.8"/>
    </reaction>
    <physiologicalReaction direction="right-to-left" evidence="2">
        <dbReference type="Rhea" id="RHEA:25426"/>
    </physiologicalReaction>
</comment>
<comment type="cofactor">
    <cofactor evidence="1">
        <name>Mg(2+)</name>
        <dbReference type="ChEBI" id="CHEBI:18420"/>
    </cofactor>
    <text evidence="1">Binds 2 magnesium ions per subunit. The magnesium ions are essentially bound to the substrate and have few direct interactions with the protein.</text>
</comment>
<comment type="pathway">
    <text>Purine metabolism; IMP biosynthesis via salvage pathway; IMP from hypoxanthine: step 1/1.</text>
</comment>
<comment type="subunit">
    <text evidence="1">Homotetramer.</text>
</comment>
<comment type="subcellular location">
    <subcellularLocation>
        <location>Cytoplasm</location>
    </subcellularLocation>
</comment>
<comment type="similarity">
    <text evidence="4">Belongs to the purine/pyrimidine phosphoribosyltransferase family.</text>
</comment>
<gene>
    <name type="primary">Hprt1</name>
    <name type="synonym">Hprt</name>
</gene>
<keyword id="KW-0007">Acetylation</keyword>
<keyword id="KW-0963">Cytoplasm</keyword>
<keyword id="KW-0903">Direct protein sequencing</keyword>
<keyword id="KW-0328">Glycosyltransferase</keyword>
<keyword id="KW-1017">Isopeptide bond</keyword>
<keyword id="KW-0460">Magnesium</keyword>
<keyword id="KW-0479">Metal-binding</keyword>
<keyword id="KW-0547">Nucleotide-binding</keyword>
<keyword id="KW-0597">Phosphoprotein</keyword>
<keyword id="KW-0660">Purine salvage</keyword>
<keyword id="KW-1185">Reference proteome</keyword>
<keyword id="KW-0808">Transferase</keyword>
<keyword id="KW-0832">Ubl conjugation</keyword>
<protein>
    <recommendedName>
        <fullName>Hypoxanthine-guanine phosphoribosyltransferase</fullName>
        <shortName>HGPRT</shortName>
        <shortName>HGPRTase</shortName>
        <ecNumber evidence="2">2.4.2.8</ecNumber>
    </recommendedName>
    <alternativeName>
        <fullName>HPRT B</fullName>
    </alternativeName>
</protein>
<name>HPRT_MOUSE</name>
<proteinExistence type="evidence at protein level"/>
<reference key="1">
    <citation type="journal article" date="1982" name="Nucleic Acids Res.">
        <title>Hypoxanthine-guanine phosphoribosyltransferase genes of mouse and Chinese hamster: construction and sequence analysis of cDNA recombinants.</title>
        <authorList>
            <person name="Konecki D.S."/>
            <person name="Brennand J."/>
            <person name="Fuscoe J.C."/>
            <person name="Caskey C.T."/>
            <person name="Chinault A.C."/>
        </authorList>
    </citation>
    <scope>NUCLEOTIDE SEQUENCE [MRNA]</scope>
</reference>
<reference key="2">
    <citation type="journal article" date="1984" name="Proc. Natl. Acad. Sci. U.S.A.">
        <title>Structure, expression, and mutation of the hypoxanthine phosphoribosyltransferase gene.</title>
        <authorList>
            <person name="Melton D.W."/>
            <person name="Konecki D.S."/>
            <person name="Brennand J."/>
            <person name="Caskey C.T."/>
        </authorList>
    </citation>
    <scope>NUCLEOTIDE SEQUENCE [GENOMIC DNA]</scope>
    <source>
        <strain>BALB/cJ</strain>
        <tissue>Myeloma</tissue>
    </source>
</reference>
<reference key="3">
    <citation type="journal article" date="2005" name="Science">
        <title>The transcriptional landscape of the mammalian genome.</title>
        <authorList>
            <person name="Carninci P."/>
            <person name="Kasukawa T."/>
            <person name="Katayama S."/>
            <person name="Gough J."/>
            <person name="Frith M.C."/>
            <person name="Maeda N."/>
            <person name="Oyama R."/>
            <person name="Ravasi T."/>
            <person name="Lenhard B."/>
            <person name="Wells C."/>
            <person name="Kodzius R."/>
            <person name="Shimokawa K."/>
            <person name="Bajic V.B."/>
            <person name="Brenner S.E."/>
            <person name="Batalov S."/>
            <person name="Forrest A.R."/>
            <person name="Zavolan M."/>
            <person name="Davis M.J."/>
            <person name="Wilming L.G."/>
            <person name="Aidinis V."/>
            <person name="Allen J.E."/>
            <person name="Ambesi-Impiombato A."/>
            <person name="Apweiler R."/>
            <person name="Aturaliya R.N."/>
            <person name="Bailey T.L."/>
            <person name="Bansal M."/>
            <person name="Baxter L."/>
            <person name="Beisel K.W."/>
            <person name="Bersano T."/>
            <person name="Bono H."/>
            <person name="Chalk A.M."/>
            <person name="Chiu K.P."/>
            <person name="Choudhary V."/>
            <person name="Christoffels A."/>
            <person name="Clutterbuck D.R."/>
            <person name="Crowe M.L."/>
            <person name="Dalla E."/>
            <person name="Dalrymple B.P."/>
            <person name="de Bono B."/>
            <person name="Della Gatta G."/>
            <person name="di Bernardo D."/>
            <person name="Down T."/>
            <person name="Engstrom P."/>
            <person name="Fagiolini M."/>
            <person name="Faulkner G."/>
            <person name="Fletcher C.F."/>
            <person name="Fukushima T."/>
            <person name="Furuno M."/>
            <person name="Futaki S."/>
            <person name="Gariboldi M."/>
            <person name="Georgii-Hemming P."/>
            <person name="Gingeras T.R."/>
            <person name="Gojobori T."/>
            <person name="Green R.E."/>
            <person name="Gustincich S."/>
            <person name="Harbers M."/>
            <person name="Hayashi Y."/>
            <person name="Hensch T.K."/>
            <person name="Hirokawa N."/>
            <person name="Hill D."/>
            <person name="Huminiecki L."/>
            <person name="Iacono M."/>
            <person name="Ikeo K."/>
            <person name="Iwama A."/>
            <person name="Ishikawa T."/>
            <person name="Jakt M."/>
            <person name="Kanapin A."/>
            <person name="Katoh M."/>
            <person name="Kawasawa Y."/>
            <person name="Kelso J."/>
            <person name="Kitamura H."/>
            <person name="Kitano H."/>
            <person name="Kollias G."/>
            <person name="Krishnan S.P."/>
            <person name="Kruger A."/>
            <person name="Kummerfeld S.K."/>
            <person name="Kurochkin I.V."/>
            <person name="Lareau L.F."/>
            <person name="Lazarevic D."/>
            <person name="Lipovich L."/>
            <person name="Liu J."/>
            <person name="Liuni S."/>
            <person name="McWilliam S."/>
            <person name="Madan Babu M."/>
            <person name="Madera M."/>
            <person name="Marchionni L."/>
            <person name="Matsuda H."/>
            <person name="Matsuzawa S."/>
            <person name="Miki H."/>
            <person name="Mignone F."/>
            <person name="Miyake S."/>
            <person name="Morris K."/>
            <person name="Mottagui-Tabar S."/>
            <person name="Mulder N."/>
            <person name="Nakano N."/>
            <person name="Nakauchi H."/>
            <person name="Ng P."/>
            <person name="Nilsson R."/>
            <person name="Nishiguchi S."/>
            <person name="Nishikawa S."/>
            <person name="Nori F."/>
            <person name="Ohara O."/>
            <person name="Okazaki Y."/>
            <person name="Orlando V."/>
            <person name="Pang K.C."/>
            <person name="Pavan W.J."/>
            <person name="Pavesi G."/>
            <person name="Pesole G."/>
            <person name="Petrovsky N."/>
            <person name="Piazza S."/>
            <person name="Reed J."/>
            <person name="Reid J.F."/>
            <person name="Ring B.Z."/>
            <person name="Ringwald M."/>
            <person name="Rost B."/>
            <person name="Ruan Y."/>
            <person name="Salzberg S.L."/>
            <person name="Sandelin A."/>
            <person name="Schneider C."/>
            <person name="Schoenbach C."/>
            <person name="Sekiguchi K."/>
            <person name="Semple C.A."/>
            <person name="Seno S."/>
            <person name="Sessa L."/>
            <person name="Sheng Y."/>
            <person name="Shibata Y."/>
            <person name="Shimada H."/>
            <person name="Shimada K."/>
            <person name="Silva D."/>
            <person name="Sinclair B."/>
            <person name="Sperling S."/>
            <person name="Stupka E."/>
            <person name="Sugiura K."/>
            <person name="Sultana R."/>
            <person name="Takenaka Y."/>
            <person name="Taki K."/>
            <person name="Tammoja K."/>
            <person name="Tan S.L."/>
            <person name="Tang S."/>
            <person name="Taylor M.S."/>
            <person name="Tegner J."/>
            <person name="Teichmann S.A."/>
            <person name="Ueda H.R."/>
            <person name="van Nimwegen E."/>
            <person name="Verardo R."/>
            <person name="Wei C.L."/>
            <person name="Yagi K."/>
            <person name="Yamanishi H."/>
            <person name="Zabarovsky E."/>
            <person name="Zhu S."/>
            <person name="Zimmer A."/>
            <person name="Hide W."/>
            <person name="Bult C."/>
            <person name="Grimmond S.M."/>
            <person name="Teasdale R.D."/>
            <person name="Liu E.T."/>
            <person name="Brusic V."/>
            <person name="Quackenbush J."/>
            <person name="Wahlestedt C."/>
            <person name="Mattick J.S."/>
            <person name="Hume D.A."/>
            <person name="Kai C."/>
            <person name="Sasaki D."/>
            <person name="Tomaru Y."/>
            <person name="Fukuda S."/>
            <person name="Kanamori-Katayama M."/>
            <person name="Suzuki M."/>
            <person name="Aoki J."/>
            <person name="Arakawa T."/>
            <person name="Iida J."/>
            <person name="Imamura K."/>
            <person name="Itoh M."/>
            <person name="Kato T."/>
            <person name="Kawaji H."/>
            <person name="Kawagashira N."/>
            <person name="Kawashima T."/>
            <person name="Kojima M."/>
            <person name="Kondo S."/>
            <person name="Konno H."/>
            <person name="Nakano K."/>
            <person name="Ninomiya N."/>
            <person name="Nishio T."/>
            <person name="Okada M."/>
            <person name="Plessy C."/>
            <person name="Shibata K."/>
            <person name="Shiraki T."/>
            <person name="Suzuki S."/>
            <person name="Tagami M."/>
            <person name="Waki K."/>
            <person name="Watahiki A."/>
            <person name="Okamura-Oho Y."/>
            <person name="Suzuki H."/>
            <person name="Kawai J."/>
            <person name="Hayashizaki Y."/>
        </authorList>
    </citation>
    <scope>NUCLEOTIDE SEQUENCE [LARGE SCALE MRNA]</scope>
    <source>
        <strain>C57BL/6J</strain>
        <strain>NOD</strain>
        <tissue>Heart</tissue>
        <tissue>Thymus</tissue>
    </source>
</reference>
<reference key="4">
    <citation type="journal article" date="2004" name="Genome Res.">
        <title>The status, quality, and expansion of the NIH full-length cDNA project: the Mammalian Gene Collection (MGC).</title>
        <authorList>
            <consortium name="The MGC Project Team"/>
        </authorList>
    </citation>
    <scope>NUCLEOTIDE SEQUENCE [LARGE SCALE MRNA]</scope>
    <source>
        <strain>C57BL/6J</strain>
        <tissue>Embryo</tissue>
    </source>
</reference>
<reference key="5">
    <citation type="submission" date="2007-03" db="UniProtKB">
        <authorList>
            <person name="Lubec G."/>
            <person name="Klug S."/>
        </authorList>
    </citation>
    <scope>PROTEIN SEQUENCE OF 74-83 AND 171-200</scope>
    <scope>IDENTIFICATION BY MASS SPECTROMETRY</scope>
    <source>
        <tissue>Hippocampus</tissue>
    </source>
</reference>
<reference key="6">
    <citation type="journal article" date="2010" name="Cell">
        <title>A tissue-specific atlas of mouse protein phosphorylation and expression.</title>
        <authorList>
            <person name="Huttlin E.L."/>
            <person name="Jedrychowski M.P."/>
            <person name="Elias J.E."/>
            <person name="Goswami T."/>
            <person name="Rad R."/>
            <person name="Beausoleil S.A."/>
            <person name="Villen J."/>
            <person name="Haas W."/>
            <person name="Sowa M.E."/>
            <person name="Gygi S.P."/>
        </authorList>
    </citation>
    <scope>IDENTIFICATION BY MASS SPECTROMETRY [LARGE SCALE ANALYSIS]</scope>
    <source>
        <tissue>Brain</tissue>
        <tissue>Brown adipose tissue</tissue>
        <tissue>Heart</tissue>
        <tissue>Kidney</tissue>
        <tissue>Liver</tissue>
        <tissue>Lung</tissue>
        <tissue>Pancreas</tissue>
        <tissue>Spleen</tissue>
        <tissue>Testis</tissue>
    </source>
</reference>
<reference key="7">
    <citation type="journal article" date="2013" name="Mol. Cell">
        <title>SIRT5-mediated lysine desuccinylation impacts diverse metabolic pathways.</title>
        <authorList>
            <person name="Park J."/>
            <person name="Chen Y."/>
            <person name="Tishkoff D.X."/>
            <person name="Peng C."/>
            <person name="Tan M."/>
            <person name="Dai L."/>
            <person name="Xie Z."/>
            <person name="Zhang Y."/>
            <person name="Zwaans B.M."/>
            <person name="Skinner M.E."/>
            <person name="Lombard D.B."/>
            <person name="Zhao Y."/>
        </authorList>
    </citation>
    <scope>ACETYLATION [LARGE SCALE ANALYSIS] AT LYS-103</scope>
    <scope>IDENTIFICATION BY MASS SPECTROMETRY [LARGE SCALE ANALYSIS]</scope>
    <source>
        <tissue>Embryonic fibroblast</tissue>
    </source>
</reference>
<feature type="chain" id="PRO_0000139588" description="Hypoxanthine-guanine phosphoribosyltransferase">
    <location>
        <begin position="1"/>
        <end position="218"/>
    </location>
</feature>
<feature type="active site" description="Proton acceptor" evidence="1">
    <location>
        <position position="138"/>
    </location>
</feature>
<feature type="binding site" evidence="1">
    <location>
        <position position="69"/>
    </location>
    <ligand>
        <name>GMP</name>
        <dbReference type="ChEBI" id="CHEBI:58115"/>
    </ligand>
</feature>
<feature type="binding site" evidence="1">
    <location>
        <begin position="134"/>
        <end position="142"/>
    </location>
    <ligand>
        <name>GMP</name>
        <dbReference type="ChEBI" id="CHEBI:58115"/>
    </ligand>
</feature>
<feature type="binding site" evidence="1">
    <location>
        <position position="166"/>
    </location>
    <ligand>
        <name>GMP</name>
        <dbReference type="ChEBI" id="CHEBI:58115"/>
    </ligand>
</feature>
<feature type="binding site" evidence="1">
    <location>
        <begin position="186"/>
        <end position="188"/>
    </location>
    <ligand>
        <name>GMP</name>
        <dbReference type="ChEBI" id="CHEBI:58115"/>
    </ligand>
</feature>
<feature type="binding site" evidence="1">
    <location>
        <position position="194"/>
    </location>
    <ligand>
        <name>GMP</name>
        <dbReference type="ChEBI" id="CHEBI:58115"/>
    </ligand>
</feature>
<feature type="binding site" evidence="1">
    <location>
        <position position="194"/>
    </location>
    <ligand>
        <name>Mg(2+)</name>
        <dbReference type="ChEBI" id="CHEBI:18420"/>
    </ligand>
</feature>
<feature type="modified residue" description="N6-acetyllysine" evidence="5">
    <location>
        <position position="103"/>
    </location>
</feature>
<feature type="modified residue" description="Phosphothreonine" evidence="3">
    <location>
        <position position="142"/>
    </location>
</feature>
<feature type="cross-link" description="Glycyl lysine isopeptide (Lys-Gly) (interchain with G-Cter in SUMO1); alternate" evidence="2">
    <location>
        <position position="115"/>
    </location>
</feature>
<feature type="cross-link" description="Glycyl lysine isopeptide (Lys-Gly) (interchain with G-Cter in SUMO2); alternate" evidence="2">
    <location>
        <position position="115"/>
    </location>
</feature>
<feature type="sequence conflict" description="In Ref. 1; AAA96232." evidence="4" ref="1">
    <original>D</original>
    <variation>N</variation>
    <location>
        <position position="201"/>
    </location>
</feature>
<organism>
    <name type="scientific">Mus musculus</name>
    <name type="common">Mouse</name>
    <dbReference type="NCBI Taxonomy" id="10090"/>
    <lineage>
        <taxon>Eukaryota</taxon>
        <taxon>Metazoa</taxon>
        <taxon>Chordata</taxon>
        <taxon>Craniata</taxon>
        <taxon>Vertebrata</taxon>
        <taxon>Euteleostomi</taxon>
        <taxon>Mammalia</taxon>
        <taxon>Eutheria</taxon>
        <taxon>Euarchontoglires</taxon>
        <taxon>Glires</taxon>
        <taxon>Rodentia</taxon>
        <taxon>Myomorpha</taxon>
        <taxon>Muroidea</taxon>
        <taxon>Muridae</taxon>
        <taxon>Murinae</taxon>
        <taxon>Mus</taxon>
        <taxon>Mus</taxon>
    </lineage>
</organism>
<accession>P00493</accession>
<accession>Q545Y2</accession>